<name>SLMA_HAEIN</name>
<proteinExistence type="inferred from homology"/>
<protein>
    <recommendedName>
        <fullName evidence="1">Nucleoid occlusion factor SlmA</fullName>
    </recommendedName>
</protein>
<keyword id="KW-0131">Cell cycle</keyword>
<keyword id="KW-0132">Cell division</keyword>
<keyword id="KW-0963">Cytoplasm</keyword>
<keyword id="KW-0238">DNA-binding</keyword>
<keyword id="KW-1185">Reference proteome</keyword>
<gene>
    <name evidence="1" type="primary">slmA</name>
    <name type="ordered locus">HI_0955</name>
</gene>
<organism>
    <name type="scientific">Haemophilus influenzae (strain ATCC 51907 / DSM 11121 / KW20 / Rd)</name>
    <dbReference type="NCBI Taxonomy" id="71421"/>
    <lineage>
        <taxon>Bacteria</taxon>
        <taxon>Pseudomonadati</taxon>
        <taxon>Pseudomonadota</taxon>
        <taxon>Gammaproteobacteria</taxon>
        <taxon>Pasteurellales</taxon>
        <taxon>Pasteurellaceae</taxon>
        <taxon>Haemophilus</taxon>
    </lineage>
</organism>
<dbReference type="EMBL" id="L42023">
    <property type="protein sequence ID" value="AAC22616.1"/>
    <property type="molecule type" value="Genomic_DNA"/>
</dbReference>
<dbReference type="EMBL" id="M77207">
    <property type="protein sequence ID" value="AAA24951.1"/>
    <property type="molecule type" value="Genomic_DNA"/>
</dbReference>
<dbReference type="PIR" id="D64162">
    <property type="entry name" value="D64162"/>
</dbReference>
<dbReference type="RefSeq" id="NP_439116.1">
    <property type="nucleotide sequence ID" value="NC_000907.1"/>
</dbReference>
<dbReference type="SMR" id="P29280"/>
<dbReference type="STRING" id="71421.HI_0955"/>
<dbReference type="EnsemblBacteria" id="AAC22616">
    <property type="protein sequence ID" value="AAC22616"/>
    <property type="gene ID" value="HI_0955"/>
</dbReference>
<dbReference type="KEGG" id="hin:HI_0955"/>
<dbReference type="PATRIC" id="fig|71421.8.peg.997"/>
<dbReference type="eggNOG" id="COG1309">
    <property type="taxonomic scope" value="Bacteria"/>
</dbReference>
<dbReference type="HOGENOM" id="CLU_069356_5_0_6"/>
<dbReference type="OrthoDB" id="9179041at2"/>
<dbReference type="PhylomeDB" id="P29280"/>
<dbReference type="BioCyc" id="HINF71421:G1GJ1-996-MONOMER"/>
<dbReference type="Proteomes" id="UP000000579">
    <property type="component" value="Chromosome"/>
</dbReference>
<dbReference type="GO" id="GO:0043590">
    <property type="term" value="C:bacterial nucleoid"/>
    <property type="evidence" value="ECO:0007669"/>
    <property type="project" value="UniProtKB-UniRule"/>
</dbReference>
<dbReference type="GO" id="GO:0005737">
    <property type="term" value="C:cytoplasm"/>
    <property type="evidence" value="ECO:0007669"/>
    <property type="project" value="UniProtKB-UniRule"/>
</dbReference>
<dbReference type="GO" id="GO:0003700">
    <property type="term" value="F:DNA-binding transcription factor activity"/>
    <property type="evidence" value="ECO:0000318"/>
    <property type="project" value="GO_Central"/>
</dbReference>
<dbReference type="GO" id="GO:0000976">
    <property type="term" value="F:transcription cis-regulatory region binding"/>
    <property type="evidence" value="ECO:0000318"/>
    <property type="project" value="GO_Central"/>
</dbReference>
<dbReference type="GO" id="GO:0051301">
    <property type="term" value="P:cell division"/>
    <property type="evidence" value="ECO:0007669"/>
    <property type="project" value="UniProtKB-KW"/>
</dbReference>
<dbReference type="GO" id="GO:0010974">
    <property type="term" value="P:negative regulation of division septum assembly"/>
    <property type="evidence" value="ECO:0007669"/>
    <property type="project" value="InterPro"/>
</dbReference>
<dbReference type="GO" id="GO:0006355">
    <property type="term" value="P:regulation of DNA-templated transcription"/>
    <property type="evidence" value="ECO:0000318"/>
    <property type="project" value="GO_Central"/>
</dbReference>
<dbReference type="Gene3D" id="1.10.357.10">
    <property type="entry name" value="Tetracycline Repressor, domain 2"/>
    <property type="match status" value="1"/>
</dbReference>
<dbReference type="HAMAP" id="MF_01839">
    <property type="entry name" value="NO_factor_SlmA"/>
    <property type="match status" value="1"/>
</dbReference>
<dbReference type="InterPro" id="IPR023772">
    <property type="entry name" value="DNA-bd_HTH_TetR-type_CS"/>
</dbReference>
<dbReference type="InterPro" id="IPR009057">
    <property type="entry name" value="Homeodomain-like_sf"/>
</dbReference>
<dbReference type="InterPro" id="IPR050624">
    <property type="entry name" value="HTH-type_Tx_Regulator"/>
</dbReference>
<dbReference type="InterPro" id="IPR001647">
    <property type="entry name" value="HTH_TetR"/>
</dbReference>
<dbReference type="InterPro" id="IPR023769">
    <property type="entry name" value="NO_SlmA"/>
</dbReference>
<dbReference type="InterPro" id="IPR054580">
    <property type="entry name" value="SlmA-like_C"/>
</dbReference>
<dbReference type="InterPro" id="IPR036271">
    <property type="entry name" value="Tet_transcr_reg_TetR-rel_C_sf"/>
</dbReference>
<dbReference type="NCBIfam" id="NF007015">
    <property type="entry name" value="PRK09480.1"/>
    <property type="match status" value="1"/>
</dbReference>
<dbReference type="PANTHER" id="PTHR43479">
    <property type="entry name" value="ACREF/ENVCD OPERON REPRESSOR-RELATED"/>
    <property type="match status" value="1"/>
</dbReference>
<dbReference type="PANTHER" id="PTHR43479:SF11">
    <property type="entry name" value="ACREF_ENVCD OPERON REPRESSOR-RELATED"/>
    <property type="match status" value="1"/>
</dbReference>
<dbReference type="Pfam" id="PF22276">
    <property type="entry name" value="SlmA-like_C"/>
    <property type="match status" value="1"/>
</dbReference>
<dbReference type="Pfam" id="PF00440">
    <property type="entry name" value="TetR_N"/>
    <property type="match status" value="1"/>
</dbReference>
<dbReference type="SUPFAM" id="SSF46689">
    <property type="entry name" value="Homeodomain-like"/>
    <property type="match status" value="1"/>
</dbReference>
<dbReference type="SUPFAM" id="SSF48498">
    <property type="entry name" value="Tetracyclin repressor-like, C-terminal domain"/>
    <property type="match status" value="1"/>
</dbReference>
<dbReference type="PROSITE" id="PS01081">
    <property type="entry name" value="HTH_TETR_1"/>
    <property type="match status" value="1"/>
</dbReference>
<dbReference type="PROSITE" id="PS50977">
    <property type="entry name" value="HTH_TETR_2"/>
    <property type="match status" value="1"/>
</dbReference>
<feature type="chain" id="PRO_0000198971" description="Nucleoid occlusion factor SlmA">
    <location>
        <begin position="1"/>
        <end position="218"/>
    </location>
</feature>
<feature type="domain" description="HTH tetR-type" evidence="1">
    <location>
        <begin position="30"/>
        <end position="90"/>
    </location>
</feature>
<feature type="DNA-binding region" description="H-T-H motif" evidence="1">
    <location>
        <begin position="53"/>
        <end position="72"/>
    </location>
</feature>
<accession>P29280</accession>
<reference key="1">
    <citation type="journal article" date="1995" name="Science">
        <title>Whole-genome random sequencing and assembly of Haemophilus influenzae Rd.</title>
        <authorList>
            <person name="Fleischmann R.D."/>
            <person name="Adams M.D."/>
            <person name="White O."/>
            <person name="Clayton R.A."/>
            <person name="Kirkness E.F."/>
            <person name="Kerlavage A.R."/>
            <person name="Bult C.J."/>
            <person name="Tomb J.-F."/>
            <person name="Dougherty B.A."/>
            <person name="Merrick J.M."/>
            <person name="McKenney K."/>
            <person name="Sutton G.G."/>
            <person name="FitzHugh W."/>
            <person name="Fields C.A."/>
            <person name="Gocayne J.D."/>
            <person name="Scott J.D."/>
            <person name="Shirley R."/>
            <person name="Liu L.-I."/>
            <person name="Glodek A."/>
            <person name="Kelley J.M."/>
            <person name="Weidman J.F."/>
            <person name="Phillips C.A."/>
            <person name="Spriggs T."/>
            <person name="Hedblom E."/>
            <person name="Cotton M.D."/>
            <person name="Utterback T.R."/>
            <person name="Hanna M.C."/>
            <person name="Nguyen D.T."/>
            <person name="Saudek D.M."/>
            <person name="Brandon R.C."/>
            <person name="Fine L.D."/>
            <person name="Fritchman J.L."/>
            <person name="Fuhrmann J.L."/>
            <person name="Geoghagen N.S.M."/>
            <person name="Gnehm C.L."/>
            <person name="McDonald L.A."/>
            <person name="Small K.V."/>
            <person name="Fraser C.M."/>
            <person name="Smith H.O."/>
            <person name="Venter J.C."/>
        </authorList>
    </citation>
    <scope>NUCLEOTIDE SEQUENCE [LARGE SCALE GENOMIC DNA]</scope>
    <source>
        <strain>ATCC 51907 / DSM 11121 / KW20 / Rd</strain>
    </source>
</reference>
<reference key="2">
    <citation type="journal article" date="1992" name="Proc. Natl. Acad. Sci. U.S.A.">
        <title>The gene encoding cAMP receptor protein is required for competence development in Haemophilus influenzae Rd.</title>
        <authorList>
            <person name="Chandler M.S."/>
        </authorList>
    </citation>
    <scope>NUCLEOTIDE SEQUENCE [GENOMIC DNA] OF 139-218</scope>
    <source>
        <strain>ATCC 51907 / DSM 11121 / KW20 / Rd</strain>
    </source>
</reference>
<sequence length="218" mass="25577">MVEEQLSLSGVEEIAPKIETPKIEKRTVKERRQQVLTVLIHMLHSERGMERMTTARLAKEVGVSEAALYRYFPSKTKMFEALIEHIESTLLSRITASMRNETQTMNRIHDILQTILDFARKNPGLTRVLTGHALMFEEAQLQARVAQFFDRLEMQFVNILQMRKLREGRAFNVDERIIASHLVTLCEGQFMRYVRTNFRLNSSQSFEQQWRFIEPLFA</sequence>
<comment type="function">
    <text evidence="1">Required for nucleoid occlusion (NO) phenomenon, which prevents Z-ring formation and cell division over the nucleoid. Acts as a DNA-associated cell division inhibitor that binds simultaneously chromosomal DNA and FtsZ, and disrupts the assembly of FtsZ polymers. SlmA-DNA-binding sequences (SBS) are dispersed on non-Ter regions of the chromosome, preventing FtsZ polymerization at these regions.</text>
</comment>
<comment type="subunit">
    <text evidence="1">Homodimer. Interacts with FtsZ.</text>
</comment>
<comment type="subcellular location">
    <subcellularLocation>
        <location evidence="1">Cytoplasm</location>
        <location evidence="1">Nucleoid</location>
    </subcellularLocation>
</comment>
<comment type="similarity">
    <text evidence="1">Belongs to the nucleoid occlusion factor SlmA family.</text>
</comment>
<evidence type="ECO:0000255" key="1">
    <source>
        <dbReference type="HAMAP-Rule" id="MF_01839"/>
    </source>
</evidence>